<organism>
    <name type="scientific">Bacillus subtilis (strain 168)</name>
    <dbReference type="NCBI Taxonomy" id="224308"/>
    <lineage>
        <taxon>Bacteria</taxon>
        <taxon>Bacillati</taxon>
        <taxon>Bacillota</taxon>
        <taxon>Bacilli</taxon>
        <taxon>Bacillales</taxon>
        <taxon>Bacillaceae</taxon>
        <taxon>Bacillus</taxon>
    </lineage>
</organism>
<feature type="chain" id="PRO_0000380612" description="Thioredoxin-like protein YdbP">
    <location>
        <begin position="1"/>
        <end position="106"/>
    </location>
</feature>
<feature type="domain" description="Thioredoxin" evidence="2">
    <location>
        <begin position="1"/>
        <end position="106"/>
    </location>
</feature>
<feature type="disulfide bond" description="Redox-active" evidence="2">
    <location>
        <begin position="29"/>
        <end position="32"/>
    </location>
</feature>
<evidence type="ECO:0000250" key="1"/>
<evidence type="ECO:0000255" key="2">
    <source>
        <dbReference type="PROSITE-ProRule" id="PRU00691"/>
    </source>
</evidence>
<evidence type="ECO:0000269" key="3">
    <source>
    </source>
</evidence>
<evidence type="ECO:0000305" key="4"/>
<protein>
    <recommendedName>
        <fullName>Thioredoxin-like protein YdbP</fullName>
    </recommendedName>
</protein>
<gene>
    <name type="primary">ydbP</name>
    <name type="ordered locus">BSU04550</name>
</gene>
<sequence length="106" mass="12432">MKKITTNEQFNELIQSDKEIIVKFYADWCPDCTRMNMFIGDILEEYNQNDWYELNKDELPDLAEKYQVMGIPSLLIFKNGEKTAHLHSANAKTPEEVTEFLSEHIS</sequence>
<reference key="1">
    <citation type="submission" date="1997-03" db="EMBL/GenBank/DDBJ databases">
        <title>A 148 kbp sequence of the region between 35 and 47 degree of the Bacillus subtilis genome.</title>
        <authorList>
            <person name="Kasahara Y."/>
            <person name="Nakai S."/>
            <person name="Lee S."/>
            <person name="Sadaie Y."/>
            <person name="Ogasawara N."/>
        </authorList>
    </citation>
    <scope>NUCLEOTIDE SEQUENCE [GENOMIC DNA]</scope>
    <source>
        <strain>168</strain>
    </source>
</reference>
<reference key="2">
    <citation type="journal article" date="1997" name="Nature">
        <title>The complete genome sequence of the Gram-positive bacterium Bacillus subtilis.</title>
        <authorList>
            <person name="Kunst F."/>
            <person name="Ogasawara N."/>
            <person name="Moszer I."/>
            <person name="Albertini A.M."/>
            <person name="Alloni G."/>
            <person name="Azevedo V."/>
            <person name="Bertero M.G."/>
            <person name="Bessieres P."/>
            <person name="Bolotin A."/>
            <person name="Borchert S."/>
            <person name="Borriss R."/>
            <person name="Boursier L."/>
            <person name="Brans A."/>
            <person name="Braun M."/>
            <person name="Brignell S.C."/>
            <person name="Bron S."/>
            <person name="Brouillet S."/>
            <person name="Bruschi C.V."/>
            <person name="Caldwell B."/>
            <person name="Capuano V."/>
            <person name="Carter N.M."/>
            <person name="Choi S.-K."/>
            <person name="Codani J.-J."/>
            <person name="Connerton I.F."/>
            <person name="Cummings N.J."/>
            <person name="Daniel R.A."/>
            <person name="Denizot F."/>
            <person name="Devine K.M."/>
            <person name="Duesterhoeft A."/>
            <person name="Ehrlich S.D."/>
            <person name="Emmerson P.T."/>
            <person name="Entian K.-D."/>
            <person name="Errington J."/>
            <person name="Fabret C."/>
            <person name="Ferrari E."/>
            <person name="Foulger D."/>
            <person name="Fritz C."/>
            <person name="Fujita M."/>
            <person name="Fujita Y."/>
            <person name="Fuma S."/>
            <person name="Galizzi A."/>
            <person name="Galleron N."/>
            <person name="Ghim S.-Y."/>
            <person name="Glaser P."/>
            <person name="Goffeau A."/>
            <person name="Golightly E.J."/>
            <person name="Grandi G."/>
            <person name="Guiseppi G."/>
            <person name="Guy B.J."/>
            <person name="Haga K."/>
            <person name="Haiech J."/>
            <person name="Harwood C.R."/>
            <person name="Henaut A."/>
            <person name="Hilbert H."/>
            <person name="Holsappel S."/>
            <person name="Hosono S."/>
            <person name="Hullo M.-F."/>
            <person name="Itaya M."/>
            <person name="Jones L.-M."/>
            <person name="Joris B."/>
            <person name="Karamata D."/>
            <person name="Kasahara Y."/>
            <person name="Klaerr-Blanchard M."/>
            <person name="Klein C."/>
            <person name="Kobayashi Y."/>
            <person name="Koetter P."/>
            <person name="Koningstein G."/>
            <person name="Krogh S."/>
            <person name="Kumano M."/>
            <person name="Kurita K."/>
            <person name="Lapidus A."/>
            <person name="Lardinois S."/>
            <person name="Lauber J."/>
            <person name="Lazarevic V."/>
            <person name="Lee S.-M."/>
            <person name="Levine A."/>
            <person name="Liu H."/>
            <person name="Masuda S."/>
            <person name="Mauel C."/>
            <person name="Medigue C."/>
            <person name="Medina N."/>
            <person name="Mellado R.P."/>
            <person name="Mizuno M."/>
            <person name="Moestl D."/>
            <person name="Nakai S."/>
            <person name="Noback M."/>
            <person name="Noone D."/>
            <person name="O'Reilly M."/>
            <person name="Ogawa K."/>
            <person name="Ogiwara A."/>
            <person name="Oudega B."/>
            <person name="Park S.-H."/>
            <person name="Parro V."/>
            <person name="Pohl T.M."/>
            <person name="Portetelle D."/>
            <person name="Porwollik S."/>
            <person name="Prescott A.M."/>
            <person name="Presecan E."/>
            <person name="Pujic P."/>
            <person name="Purnelle B."/>
            <person name="Rapoport G."/>
            <person name="Rey M."/>
            <person name="Reynolds S."/>
            <person name="Rieger M."/>
            <person name="Rivolta C."/>
            <person name="Rocha E."/>
            <person name="Roche B."/>
            <person name="Rose M."/>
            <person name="Sadaie Y."/>
            <person name="Sato T."/>
            <person name="Scanlan E."/>
            <person name="Schleich S."/>
            <person name="Schroeter R."/>
            <person name="Scoffone F."/>
            <person name="Sekiguchi J."/>
            <person name="Sekowska A."/>
            <person name="Seror S.J."/>
            <person name="Serror P."/>
            <person name="Shin B.-S."/>
            <person name="Soldo B."/>
            <person name="Sorokin A."/>
            <person name="Tacconi E."/>
            <person name="Takagi T."/>
            <person name="Takahashi H."/>
            <person name="Takemaru K."/>
            <person name="Takeuchi M."/>
            <person name="Tamakoshi A."/>
            <person name="Tanaka T."/>
            <person name="Terpstra P."/>
            <person name="Tognoni A."/>
            <person name="Tosato V."/>
            <person name="Uchiyama S."/>
            <person name="Vandenbol M."/>
            <person name="Vannier F."/>
            <person name="Vassarotti A."/>
            <person name="Viari A."/>
            <person name="Wambutt R."/>
            <person name="Wedler E."/>
            <person name="Wedler H."/>
            <person name="Weitzenegger T."/>
            <person name="Winters P."/>
            <person name="Wipat A."/>
            <person name="Yamamoto H."/>
            <person name="Yamane K."/>
            <person name="Yasumoto K."/>
            <person name="Yata K."/>
            <person name="Yoshida K."/>
            <person name="Yoshikawa H.-F."/>
            <person name="Zumstein E."/>
            <person name="Yoshikawa H."/>
            <person name="Danchin A."/>
        </authorList>
    </citation>
    <scope>NUCLEOTIDE SEQUENCE [LARGE SCALE GENOMIC DNA]</scope>
    <source>
        <strain>168</strain>
    </source>
</reference>
<reference key="3">
    <citation type="journal article" date="1999" name="J. Bacteriol.">
        <title>Identification of sigma(B)-dependent genes in Bacillus subtilis using a promoter consensus-directed search and oligonucleotide hybridization.</title>
        <authorList>
            <person name="Petersohn A."/>
            <person name="Bernhardt J."/>
            <person name="Gerth U."/>
            <person name="Hoeper D."/>
            <person name="Koburger T."/>
            <person name="Voelker U."/>
            <person name="Hecker M."/>
        </authorList>
    </citation>
    <scope>INDUCTION</scope>
    <source>
        <strain>168</strain>
    </source>
</reference>
<proteinExistence type="evidence at transcript level"/>
<dbReference type="EMBL" id="AB001488">
    <property type="protein sequence ID" value="BAA19292.1"/>
    <property type="molecule type" value="Genomic_DNA"/>
</dbReference>
<dbReference type="EMBL" id="AL009126">
    <property type="protein sequence ID" value="CAB12262.1"/>
    <property type="molecule type" value="Genomic_DNA"/>
</dbReference>
<dbReference type="PIR" id="C69772">
    <property type="entry name" value="C69772"/>
</dbReference>
<dbReference type="RefSeq" id="NP_388336.1">
    <property type="nucleotide sequence ID" value="NC_000964.3"/>
</dbReference>
<dbReference type="RefSeq" id="WP_003234326.1">
    <property type="nucleotide sequence ID" value="NZ_OZ025638.1"/>
</dbReference>
<dbReference type="SMR" id="P96611"/>
<dbReference type="FunCoup" id="P96611">
    <property type="interactions" value="38"/>
</dbReference>
<dbReference type="STRING" id="224308.BSU04550"/>
<dbReference type="jPOST" id="P96611"/>
<dbReference type="PaxDb" id="224308-BSU04550"/>
<dbReference type="EnsemblBacteria" id="CAB12262">
    <property type="protein sequence ID" value="CAB12262"/>
    <property type="gene ID" value="BSU_04550"/>
</dbReference>
<dbReference type="GeneID" id="939940"/>
<dbReference type="KEGG" id="bsu:BSU04550"/>
<dbReference type="PATRIC" id="fig|224308.179.peg.483"/>
<dbReference type="eggNOG" id="COG0526">
    <property type="taxonomic scope" value="Bacteria"/>
</dbReference>
<dbReference type="InParanoid" id="P96611"/>
<dbReference type="OrthoDB" id="7629852at2"/>
<dbReference type="PhylomeDB" id="P96611"/>
<dbReference type="BioCyc" id="BSUB:BSU04550-MONOMER"/>
<dbReference type="Proteomes" id="UP000001570">
    <property type="component" value="Chromosome"/>
</dbReference>
<dbReference type="GO" id="GO:0005737">
    <property type="term" value="C:cytoplasm"/>
    <property type="evidence" value="ECO:0000318"/>
    <property type="project" value="GO_Central"/>
</dbReference>
<dbReference type="GO" id="GO:0005829">
    <property type="term" value="C:cytosol"/>
    <property type="evidence" value="ECO:0000318"/>
    <property type="project" value="GO_Central"/>
</dbReference>
<dbReference type="GO" id="GO:0015035">
    <property type="term" value="F:protein-disulfide reductase activity"/>
    <property type="evidence" value="ECO:0000318"/>
    <property type="project" value="GO_Central"/>
</dbReference>
<dbReference type="GO" id="GO:0045454">
    <property type="term" value="P:cell redox homeostasis"/>
    <property type="evidence" value="ECO:0000318"/>
    <property type="project" value="GO_Central"/>
</dbReference>
<dbReference type="CDD" id="cd02947">
    <property type="entry name" value="TRX_family"/>
    <property type="match status" value="1"/>
</dbReference>
<dbReference type="FunFam" id="3.40.30.10:FF:000144">
    <property type="entry name" value="Thioredoxin domain"/>
    <property type="match status" value="1"/>
</dbReference>
<dbReference type="Gene3D" id="3.40.30.10">
    <property type="entry name" value="Glutaredoxin"/>
    <property type="match status" value="1"/>
</dbReference>
<dbReference type="InterPro" id="IPR005746">
    <property type="entry name" value="Thioredoxin"/>
</dbReference>
<dbReference type="InterPro" id="IPR036249">
    <property type="entry name" value="Thioredoxin-like_sf"/>
</dbReference>
<dbReference type="InterPro" id="IPR013766">
    <property type="entry name" value="Thioredoxin_domain"/>
</dbReference>
<dbReference type="PANTHER" id="PTHR45663">
    <property type="entry name" value="GEO12009P1"/>
    <property type="match status" value="1"/>
</dbReference>
<dbReference type="PANTHER" id="PTHR45663:SF6">
    <property type="entry name" value="THIOREDOXIN-LIKE PROTEIN YDBP"/>
    <property type="match status" value="1"/>
</dbReference>
<dbReference type="Pfam" id="PF00085">
    <property type="entry name" value="Thioredoxin"/>
    <property type="match status" value="1"/>
</dbReference>
<dbReference type="PIRSF" id="PIRSF000077">
    <property type="entry name" value="Thioredoxin"/>
    <property type="match status" value="1"/>
</dbReference>
<dbReference type="SUPFAM" id="SSF52833">
    <property type="entry name" value="Thioredoxin-like"/>
    <property type="match status" value="1"/>
</dbReference>
<dbReference type="PROSITE" id="PS51352">
    <property type="entry name" value="THIOREDOXIN_2"/>
    <property type="match status" value="1"/>
</dbReference>
<comment type="function">
    <text evidence="1">Participates in various redox reactions through the reversible oxidation of its active center dithiol to a disulfide and catalyzes dithiol-disulfide exchange reactions.</text>
</comment>
<comment type="induction">
    <text evidence="3">Activated by SigB in response to ethanol stress.</text>
</comment>
<comment type="similarity">
    <text evidence="4">Belongs to the thioredoxin family.</text>
</comment>
<accession>P96611</accession>
<accession>Q797L1</accession>
<keyword id="KW-1015">Disulfide bond</keyword>
<keyword id="KW-0249">Electron transport</keyword>
<keyword id="KW-0676">Redox-active center</keyword>
<keyword id="KW-1185">Reference proteome</keyword>
<keyword id="KW-0813">Transport</keyword>
<name>YDBP_BACSU</name>